<organism>
    <name type="scientific">Beijerinckia indica subsp. indica (strain ATCC 9039 / DSM 1715 / NCIMB 8712)</name>
    <dbReference type="NCBI Taxonomy" id="395963"/>
    <lineage>
        <taxon>Bacteria</taxon>
        <taxon>Pseudomonadati</taxon>
        <taxon>Pseudomonadota</taxon>
        <taxon>Alphaproteobacteria</taxon>
        <taxon>Hyphomicrobiales</taxon>
        <taxon>Beijerinckiaceae</taxon>
        <taxon>Beijerinckia</taxon>
    </lineage>
</organism>
<feature type="chain" id="PRO_1000127930" description="Small ribosomal subunit protein uS19">
    <location>
        <begin position="1"/>
        <end position="92"/>
    </location>
</feature>
<dbReference type="EMBL" id="CP001016">
    <property type="protein sequence ID" value="ACB94998.1"/>
    <property type="molecule type" value="Genomic_DNA"/>
</dbReference>
<dbReference type="RefSeq" id="WP_012384355.1">
    <property type="nucleotide sequence ID" value="NC_010581.1"/>
</dbReference>
<dbReference type="SMR" id="B2IK66"/>
<dbReference type="STRING" id="395963.Bind_1358"/>
<dbReference type="KEGG" id="bid:Bind_1358"/>
<dbReference type="eggNOG" id="COG0185">
    <property type="taxonomic scope" value="Bacteria"/>
</dbReference>
<dbReference type="HOGENOM" id="CLU_144911_0_1_5"/>
<dbReference type="OrthoDB" id="9797833at2"/>
<dbReference type="Proteomes" id="UP000001695">
    <property type="component" value="Chromosome"/>
</dbReference>
<dbReference type="GO" id="GO:0005737">
    <property type="term" value="C:cytoplasm"/>
    <property type="evidence" value="ECO:0007669"/>
    <property type="project" value="UniProtKB-ARBA"/>
</dbReference>
<dbReference type="GO" id="GO:0015935">
    <property type="term" value="C:small ribosomal subunit"/>
    <property type="evidence" value="ECO:0007669"/>
    <property type="project" value="InterPro"/>
</dbReference>
<dbReference type="GO" id="GO:0019843">
    <property type="term" value="F:rRNA binding"/>
    <property type="evidence" value="ECO:0007669"/>
    <property type="project" value="UniProtKB-UniRule"/>
</dbReference>
<dbReference type="GO" id="GO:0003735">
    <property type="term" value="F:structural constituent of ribosome"/>
    <property type="evidence" value="ECO:0007669"/>
    <property type="project" value="InterPro"/>
</dbReference>
<dbReference type="GO" id="GO:0000028">
    <property type="term" value="P:ribosomal small subunit assembly"/>
    <property type="evidence" value="ECO:0007669"/>
    <property type="project" value="TreeGrafter"/>
</dbReference>
<dbReference type="GO" id="GO:0006412">
    <property type="term" value="P:translation"/>
    <property type="evidence" value="ECO:0007669"/>
    <property type="project" value="UniProtKB-UniRule"/>
</dbReference>
<dbReference type="FunFam" id="3.30.860.10:FF:000001">
    <property type="entry name" value="30S ribosomal protein S19"/>
    <property type="match status" value="1"/>
</dbReference>
<dbReference type="Gene3D" id="3.30.860.10">
    <property type="entry name" value="30s Ribosomal Protein S19, Chain A"/>
    <property type="match status" value="1"/>
</dbReference>
<dbReference type="HAMAP" id="MF_00531">
    <property type="entry name" value="Ribosomal_uS19"/>
    <property type="match status" value="1"/>
</dbReference>
<dbReference type="InterPro" id="IPR002222">
    <property type="entry name" value="Ribosomal_uS19"/>
</dbReference>
<dbReference type="InterPro" id="IPR005732">
    <property type="entry name" value="Ribosomal_uS19_bac-type"/>
</dbReference>
<dbReference type="InterPro" id="IPR020934">
    <property type="entry name" value="Ribosomal_uS19_CS"/>
</dbReference>
<dbReference type="InterPro" id="IPR023575">
    <property type="entry name" value="Ribosomal_uS19_SF"/>
</dbReference>
<dbReference type="NCBIfam" id="TIGR01050">
    <property type="entry name" value="rpsS_bact"/>
    <property type="match status" value="1"/>
</dbReference>
<dbReference type="PANTHER" id="PTHR11880">
    <property type="entry name" value="RIBOSOMAL PROTEIN S19P FAMILY MEMBER"/>
    <property type="match status" value="1"/>
</dbReference>
<dbReference type="PANTHER" id="PTHR11880:SF8">
    <property type="entry name" value="SMALL RIBOSOMAL SUBUNIT PROTEIN US19M"/>
    <property type="match status" value="1"/>
</dbReference>
<dbReference type="Pfam" id="PF00203">
    <property type="entry name" value="Ribosomal_S19"/>
    <property type="match status" value="1"/>
</dbReference>
<dbReference type="PIRSF" id="PIRSF002144">
    <property type="entry name" value="Ribosomal_S19"/>
    <property type="match status" value="1"/>
</dbReference>
<dbReference type="PRINTS" id="PR00975">
    <property type="entry name" value="RIBOSOMALS19"/>
</dbReference>
<dbReference type="SUPFAM" id="SSF54570">
    <property type="entry name" value="Ribosomal protein S19"/>
    <property type="match status" value="1"/>
</dbReference>
<dbReference type="PROSITE" id="PS00323">
    <property type="entry name" value="RIBOSOMAL_S19"/>
    <property type="match status" value="1"/>
</dbReference>
<keyword id="KW-1185">Reference proteome</keyword>
<keyword id="KW-0687">Ribonucleoprotein</keyword>
<keyword id="KW-0689">Ribosomal protein</keyword>
<keyword id="KW-0694">RNA-binding</keyword>
<keyword id="KW-0699">rRNA-binding</keyword>
<comment type="function">
    <text evidence="1">Protein S19 forms a complex with S13 that binds strongly to the 16S ribosomal RNA.</text>
</comment>
<comment type="similarity">
    <text evidence="1">Belongs to the universal ribosomal protein uS19 family.</text>
</comment>
<protein>
    <recommendedName>
        <fullName evidence="1">Small ribosomal subunit protein uS19</fullName>
    </recommendedName>
    <alternativeName>
        <fullName evidence="2">30S ribosomal protein S19</fullName>
    </alternativeName>
</protein>
<gene>
    <name evidence="1" type="primary">rpsS</name>
    <name type="ordered locus">Bind_1358</name>
</gene>
<evidence type="ECO:0000255" key="1">
    <source>
        <dbReference type="HAMAP-Rule" id="MF_00531"/>
    </source>
</evidence>
<evidence type="ECO:0000305" key="2"/>
<name>RS19_BEII9</name>
<accession>B2IK66</accession>
<sequence length="92" mass="10326">MARSIWKGPFVDGYLLKKAEAARASTRSEVIKIWSRRSTILPQFVGLTFGVYNGHKHVPVSVTEDMIGHKFGEFSPTRTFHGHAADKKARRG</sequence>
<proteinExistence type="inferred from homology"/>
<reference key="1">
    <citation type="journal article" date="2010" name="J. Bacteriol.">
        <title>Complete genome sequence of Beijerinckia indica subsp. indica.</title>
        <authorList>
            <person name="Tamas I."/>
            <person name="Dedysh S.N."/>
            <person name="Liesack W."/>
            <person name="Stott M.B."/>
            <person name="Alam M."/>
            <person name="Murrell J.C."/>
            <person name="Dunfield P.F."/>
        </authorList>
    </citation>
    <scope>NUCLEOTIDE SEQUENCE [LARGE SCALE GENOMIC DNA]</scope>
    <source>
        <strain>ATCC 9039 / DSM 1715 / NCIMB 8712</strain>
    </source>
</reference>